<sequence>MNRDSFYPAIACFPLLLMLAGCAPMHETRQALSQQTPAAQVDTALPTALKNGWPDSQWWLEYHDNQLTSLINNALQNAPDMQVAEQRIQLAEAQAKAVATQDGPQIDFSADMERQKMSAEGLMGPFALNDPAAGTTGPWYTNGTFGLTAGWHLDIWGKNRAEVTARLGTVKARAAEREQTRQLLAGSVARLYWEWQTQAALNTVLQQIEKEQNTIIATDRQLYQNGITSSVDGVETDINASKTRQQLNDVAGKMKIIEARLNALTNHQTKSLKLKPVALPKVASQLPDELGYSLLARRADLQAAHWYVESSLSTIDAAKAAFYPDINLMAFLQQDALHLSDLFRHSAQQMGVTAGLTLPIFDSGRLNANLDIAKAESNLSIASYNKAVVEAVNDVARAASQVQTLAEKNQHQAQIERDALRVVGLAQARFNAGIIAGSRVSEARIPALRERANGLLLQGQWLDASIRLTGALGGGYKR</sequence>
<name>MDTQ_SHIFL</name>
<dbReference type="EMBL" id="AE005674">
    <property type="protein sequence ID" value="AAN43745.1"/>
    <property type="status" value="ALT_SEQ"/>
    <property type="molecule type" value="Genomic_DNA"/>
</dbReference>
<dbReference type="EMBL" id="AE005674">
    <property type="protein sequence ID" value="AAN43746.1"/>
    <property type="status" value="ALT_SEQ"/>
    <property type="molecule type" value="Genomic_DNA"/>
</dbReference>
<dbReference type="EMBL" id="AE014073">
    <property type="status" value="NOT_ANNOTATED_CDS"/>
    <property type="molecule type" value="Genomic_DNA"/>
</dbReference>
<dbReference type="RefSeq" id="WP_001078127.1">
    <property type="nucleotide sequence ID" value="NZ_UIPM01000023.1"/>
</dbReference>
<dbReference type="SMR" id="Q83KF5"/>
<dbReference type="STRING" id="198214.SF2223"/>
<dbReference type="PaxDb" id="198214-SF2223"/>
<dbReference type="PATRIC" id="fig|623.156.peg.4059"/>
<dbReference type="HOGENOM" id="CLU_012817_6_0_6"/>
<dbReference type="Proteomes" id="UP000001006">
    <property type="component" value="Chromosome"/>
</dbReference>
<dbReference type="Proteomes" id="UP000002673">
    <property type="component" value="Chromosome"/>
</dbReference>
<dbReference type="GO" id="GO:0009279">
    <property type="term" value="C:cell outer membrane"/>
    <property type="evidence" value="ECO:0007669"/>
    <property type="project" value="UniProtKB-SubCell"/>
</dbReference>
<dbReference type="GO" id="GO:0015562">
    <property type="term" value="F:efflux transmembrane transporter activity"/>
    <property type="evidence" value="ECO:0007669"/>
    <property type="project" value="InterPro"/>
</dbReference>
<dbReference type="GO" id="GO:0046677">
    <property type="term" value="P:response to antibiotic"/>
    <property type="evidence" value="ECO:0007669"/>
    <property type="project" value="UniProtKB-KW"/>
</dbReference>
<dbReference type="Gene3D" id="1.20.1600.10">
    <property type="entry name" value="Outer membrane efflux proteins (OEP)"/>
    <property type="match status" value="1"/>
</dbReference>
<dbReference type="Gene3D" id="2.20.200.10">
    <property type="entry name" value="Outer membrane efflux proteins (OEP)"/>
    <property type="match status" value="1"/>
</dbReference>
<dbReference type="InterPro" id="IPR050737">
    <property type="entry name" value="OMF"/>
</dbReference>
<dbReference type="InterPro" id="IPR003423">
    <property type="entry name" value="OMP_efflux"/>
</dbReference>
<dbReference type="InterPro" id="IPR010131">
    <property type="entry name" value="RND_efflux_OM_lipoprot_NodT"/>
</dbReference>
<dbReference type="NCBIfam" id="TIGR01845">
    <property type="entry name" value="outer_NodT"/>
    <property type="match status" value="1"/>
</dbReference>
<dbReference type="NCBIfam" id="NF008524">
    <property type="entry name" value="PRK11459.1"/>
    <property type="match status" value="1"/>
</dbReference>
<dbReference type="PANTHER" id="PTHR30203:SF20">
    <property type="entry name" value="MULTIDRUG RESISTANCE OUTER MEMBRANE PROTEIN MDTP-RELATED"/>
    <property type="match status" value="1"/>
</dbReference>
<dbReference type="PANTHER" id="PTHR30203">
    <property type="entry name" value="OUTER MEMBRANE CATION EFFLUX PROTEIN"/>
    <property type="match status" value="1"/>
</dbReference>
<dbReference type="Pfam" id="PF02321">
    <property type="entry name" value="OEP"/>
    <property type="match status" value="2"/>
</dbReference>
<dbReference type="SUPFAM" id="SSF56954">
    <property type="entry name" value="Outer membrane efflux proteins (OEP)"/>
    <property type="match status" value="1"/>
</dbReference>
<dbReference type="PROSITE" id="PS51257">
    <property type="entry name" value="PROKAR_LIPOPROTEIN"/>
    <property type="match status" value="1"/>
</dbReference>
<gene>
    <name type="primary">mdtQ</name>
    <name type="ordered locus">SF2223/SF2224</name>
    <name type="ordered locus">S2352/S2353</name>
</gene>
<accession>Q83KF5</accession>
<accession>Q83KF4</accession>
<organism>
    <name type="scientific">Shigella flexneri</name>
    <dbReference type="NCBI Taxonomy" id="623"/>
    <lineage>
        <taxon>Bacteria</taxon>
        <taxon>Pseudomonadati</taxon>
        <taxon>Pseudomonadota</taxon>
        <taxon>Gammaproteobacteria</taxon>
        <taxon>Enterobacterales</taxon>
        <taxon>Enterobacteriaceae</taxon>
        <taxon>Shigella</taxon>
    </lineage>
</organism>
<comment type="function">
    <text evidence="1">Could be involved in resistance to puromycin, acriflavine and tetraphenylarsonium chloride.</text>
</comment>
<comment type="subcellular location">
    <subcellularLocation>
        <location evidence="3">Cell outer membrane</location>
        <topology evidence="2">Lipid-anchor</topology>
    </subcellularLocation>
</comment>
<comment type="similarity">
    <text evidence="3">Belongs to the outer membrane factor (OMF) (TC 1.B.17) family.</text>
</comment>
<comment type="caution">
    <text evidence="3">Could be the product of a pseudogene.</text>
</comment>
<comment type="sequence caution" evidence="3">
    <conflict type="erroneous termination">
        <sequence resource="EMBL-CDS" id="AAN43745"/>
    </conflict>
    <text>Truncated C-terminus.</text>
</comment>
<comment type="sequence caution" evidence="3">
    <conflict type="erroneous termination">
        <sequence resource="EMBL-CDS" id="AAN43746"/>
    </conflict>
    <text>Truncated C-terminus.</text>
</comment>
<comment type="sequence caution" evidence="3">
    <conflict type="erroneous termination">
        <sequence resource="EMBL" id="AE014073"/>
    </conflict>
    <text>Truncated C-terminus.</text>
</comment>
<keyword id="KW-0046">Antibiotic resistance</keyword>
<keyword id="KW-0998">Cell outer membrane</keyword>
<keyword id="KW-0449">Lipoprotein</keyword>
<keyword id="KW-0472">Membrane</keyword>
<keyword id="KW-0564">Palmitate</keyword>
<keyword id="KW-1185">Reference proteome</keyword>
<keyword id="KW-0732">Signal</keyword>
<keyword id="KW-0812">Transmembrane</keyword>
<keyword id="KW-1134">Transmembrane beta strand</keyword>
<evidence type="ECO:0000250" key="1"/>
<evidence type="ECO:0000255" key="2">
    <source>
        <dbReference type="PROSITE-ProRule" id="PRU00303"/>
    </source>
</evidence>
<evidence type="ECO:0000305" key="3"/>
<feature type="signal peptide" evidence="2">
    <location>
        <begin position="1"/>
        <end position="21"/>
    </location>
</feature>
<feature type="chain" id="PRO_0000031016" description="Putative multidrug resistance outer membrane protein MdtQ">
    <location>
        <begin position="22"/>
        <end position="478"/>
    </location>
</feature>
<feature type="lipid moiety-binding region" description="N-palmitoyl cysteine" evidence="2">
    <location>
        <position position="22"/>
    </location>
</feature>
<feature type="lipid moiety-binding region" description="S-diacylglycerol cysteine" evidence="2">
    <location>
        <position position="22"/>
    </location>
</feature>
<reference key="1">
    <citation type="journal article" date="2002" name="Nucleic Acids Res.">
        <title>Genome sequence of Shigella flexneri 2a: insights into pathogenicity through comparison with genomes of Escherichia coli K12 and O157.</title>
        <authorList>
            <person name="Jin Q."/>
            <person name="Yuan Z."/>
            <person name="Xu J."/>
            <person name="Wang Y."/>
            <person name="Shen Y."/>
            <person name="Lu W."/>
            <person name="Wang J."/>
            <person name="Liu H."/>
            <person name="Yang J."/>
            <person name="Yang F."/>
            <person name="Zhang X."/>
            <person name="Zhang J."/>
            <person name="Yang G."/>
            <person name="Wu H."/>
            <person name="Qu D."/>
            <person name="Dong J."/>
            <person name="Sun L."/>
            <person name="Xue Y."/>
            <person name="Zhao A."/>
            <person name="Gao Y."/>
            <person name="Zhu J."/>
            <person name="Kan B."/>
            <person name="Ding K."/>
            <person name="Chen S."/>
            <person name="Cheng H."/>
            <person name="Yao Z."/>
            <person name="He B."/>
            <person name="Chen R."/>
            <person name="Ma D."/>
            <person name="Qiang B."/>
            <person name="Wen Y."/>
            <person name="Hou Y."/>
            <person name="Yu J."/>
        </authorList>
    </citation>
    <scope>NUCLEOTIDE SEQUENCE [LARGE SCALE GENOMIC DNA]</scope>
    <source>
        <strain>301 / Serotype 2a</strain>
    </source>
</reference>
<reference key="2">
    <citation type="journal article" date="2003" name="Infect. Immun.">
        <title>Complete genome sequence and comparative genomics of Shigella flexneri serotype 2a strain 2457T.</title>
        <authorList>
            <person name="Wei J."/>
            <person name="Goldberg M.B."/>
            <person name="Burland V."/>
            <person name="Venkatesan M.M."/>
            <person name="Deng W."/>
            <person name="Fournier G."/>
            <person name="Mayhew G.F."/>
            <person name="Plunkett G. III"/>
            <person name="Rose D.J."/>
            <person name="Darling A."/>
            <person name="Mau B."/>
            <person name="Perna N.T."/>
            <person name="Payne S.M."/>
            <person name="Runyen-Janecky L.J."/>
            <person name="Zhou S."/>
            <person name="Schwartz D.C."/>
            <person name="Blattner F.R."/>
        </authorList>
    </citation>
    <scope>NUCLEOTIDE SEQUENCE [LARGE SCALE GENOMIC DNA]</scope>
    <source>
        <strain>ATCC 700930 / 2457T / Serotype 2a</strain>
    </source>
</reference>
<protein>
    <recommendedName>
        <fullName>Putative multidrug resistance outer membrane protein MdtQ</fullName>
    </recommendedName>
</protein>
<proteinExistence type="uncertain"/>